<accession>A2T381</accession>
<geneLocation type="chloroplast"/>
<sequence>MAVPKKRTSKSKKRIRKSVWREKTKKIASKAFSLAQSILTNRSKSFYYTTNEKISESTE</sequence>
<comment type="subcellular location">
    <subcellularLocation>
        <location>Plastid</location>
        <location>Chloroplast</location>
    </subcellularLocation>
</comment>
<comment type="similarity">
    <text evidence="1">Belongs to the bacterial ribosomal protein bL32 family.</text>
</comment>
<organism>
    <name type="scientific">Angiopteris evecta</name>
    <name type="common">Mule's foot fern</name>
    <name type="synonym">Polypodium evectum</name>
    <dbReference type="NCBI Taxonomy" id="13825"/>
    <lineage>
        <taxon>Eukaryota</taxon>
        <taxon>Viridiplantae</taxon>
        <taxon>Streptophyta</taxon>
        <taxon>Embryophyta</taxon>
        <taxon>Tracheophyta</taxon>
        <taxon>Polypodiopsida</taxon>
        <taxon>Marattiidae</taxon>
        <taxon>Marattiales</taxon>
        <taxon>Marattiaceae</taxon>
        <taxon>Angiopteris</taxon>
    </lineage>
</organism>
<dbReference type="EMBL" id="DQ821119">
    <property type="protein sequence ID" value="ABG79648.1"/>
    <property type="molecule type" value="Genomic_DNA"/>
</dbReference>
<dbReference type="RefSeq" id="YP_001023749.1">
    <property type="nucleotide sequence ID" value="NC_008829.1"/>
</dbReference>
<dbReference type="SMR" id="A2T381"/>
<dbReference type="GeneID" id="4788252"/>
<dbReference type="GO" id="GO:0009507">
    <property type="term" value="C:chloroplast"/>
    <property type="evidence" value="ECO:0007669"/>
    <property type="project" value="UniProtKB-SubCell"/>
</dbReference>
<dbReference type="GO" id="GO:0015934">
    <property type="term" value="C:large ribosomal subunit"/>
    <property type="evidence" value="ECO:0007669"/>
    <property type="project" value="InterPro"/>
</dbReference>
<dbReference type="GO" id="GO:0003735">
    <property type="term" value="F:structural constituent of ribosome"/>
    <property type="evidence" value="ECO:0007669"/>
    <property type="project" value="InterPro"/>
</dbReference>
<dbReference type="GO" id="GO:0006412">
    <property type="term" value="P:translation"/>
    <property type="evidence" value="ECO:0007669"/>
    <property type="project" value="UniProtKB-UniRule"/>
</dbReference>
<dbReference type="HAMAP" id="MF_00340">
    <property type="entry name" value="Ribosomal_bL32"/>
    <property type="match status" value="1"/>
</dbReference>
<dbReference type="InterPro" id="IPR002677">
    <property type="entry name" value="Ribosomal_bL32"/>
</dbReference>
<dbReference type="InterPro" id="IPR044958">
    <property type="entry name" value="Ribosomal_bL32_plant/cyanobact"/>
</dbReference>
<dbReference type="InterPro" id="IPR011332">
    <property type="entry name" value="Ribosomal_zn-bd"/>
</dbReference>
<dbReference type="NCBIfam" id="TIGR01031">
    <property type="entry name" value="rpmF_bact"/>
    <property type="match status" value="1"/>
</dbReference>
<dbReference type="PANTHER" id="PTHR36083">
    <property type="entry name" value="50S RIBOSOMAL PROTEIN L32, CHLOROPLASTIC"/>
    <property type="match status" value="1"/>
</dbReference>
<dbReference type="PANTHER" id="PTHR36083:SF1">
    <property type="entry name" value="LARGE RIBOSOMAL SUBUNIT PROTEIN BL32C"/>
    <property type="match status" value="1"/>
</dbReference>
<dbReference type="Pfam" id="PF01783">
    <property type="entry name" value="Ribosomal_L32p"/>
    <property type="match status" value="1"/>
</dbReference>
<dbReference type="SUPFAM" id="SSF57829">
    <property type="entry name" value="Zn-binding ribosomal proteins"/>
    <property type="match status" value="1"/>
</dbReference>
<gene>
    <name evidence="1" type="primary">rpl32</name>
</gene>
<keyword id="KW-0150">Chloroplast</keyword>
<keyword id="KW-0934">Plastid</keyword>
<keyword id="KW-0687">Ribonucleoprotein</keyword>
<keyword id="KW-0689">Ribosomal protein</keyword>
<protein>
    <recommendedName>
        <fullName evidence="1">Large ribosomal subunit protein bL32c</fullName>
    </recommendedName>
    <alternativeName>
        <fullName evidence="3">50S ribosomal protein L32, chloroplastic</fullName>
    </alternativeName>
</protein>
<proteinExistence type="inferred from homology"/>
<feature type="chain" id="PRO_0000296606" description="Large ribosomal subunit protein bL32c">
    <location>
        <begin position="1"/>
        <end position="59"/>
    </location>
</feature>
<feature type="region of interest" description="Disordered" evidence="2">
    <location>
        <begin position="1"/>
        <end position="20"/>
    </location>
</feature>
<name>RK32_ANGEV</name>
<evidence type="ECO:0000255" key="1">
    <source>
        <dbReference type="HAMAP-Rule" id="MF_00340"/>
    </source>
</evidence>
<evidence type="ECO:0000256" key="2">
    <source>
        <dbReference type="SAM" id="MobiDB-lite"/>
    </source>
</evidence>
<evidence type="ECO:0000305" key="3"/>
<reference key="1">
    <citation type="journal article" date="2007" name="Am. Fern J.">
        <title>The complete plastid genome sequence of Angiopteris evecta (G. Forst.) Hoffm. (Marattiaceae).</title>
        <authorList>
            <person name="Roper J.M."/>
            <person name="Hansen S.K."/>
            <person name="Wolf P.G."/>
            <person name="Karol K.G."/>
            <person name="Mandoli D.F."/>
            <person name="Everett K.D.E."/>
            <person name="Kuehl J.V."/>
            <person name="Boore J.L."/>
        </authorList>
    </citation>
    <scope>NUCLEOTIDE SEQUENCE [LARGE SCALE GENOMIC DNA]</scope>
</reference>